<sequence length="471" mass="51828">MSGRARKEAVQAAARELLKFVNRSPSPFHAVAECRSRLLQAGFHELKETESWDIKPESKYFLTRNSSTIIAFAVGGQYVPGNGFSLIGAHTDSPCLRVKRRSRRSQVGFQQVGVETYGGGIWSTWFDRDLTLAGRVIVKCPTSGRLEQRLVHVDRPILRIPHLAIHLQRNVNENFGPNMEMHLVPILATSIQEELEKGTPEPGPLNATDERHHSVLTSLLCAHLGLSPEDILEMELCLADTQPAVLGGAYEEFIFAPRLDNLHSCFCALQALIDSCSAPASLAADPHVRMIALYDNEEVGSESAQGAQSLLTELVLRRISASPQHLTAFEEAIPKSYMISADMAHAVHPNYLDKHEENHRPLFHKGPVIKVNSKQRYASNAVSEALIREVASSVGVPLQDLMVRNDSPCGTTIGPILASRLGLRVLDLGSPQLAMHSIRETACTTGVLQTITLFKGFFELFPSLSRSLLVD</sequence>
<feature type="chain" id="PRO_0000284910" description="Aspartyl aminopeptidase">
    <location>
        <begin position="1"/>
        <end position="471"/>
    </location>
</feature>
<feature type="binding site" evidence="3 5">
    <location>
        <position position="90"/>
    </location>
    <ligand>
        <name>Zn(2+)</name>
        <dbReference type="ChEBI" id="CHEBI:29105"/>
        <label>1</label>
    </ligand>
</feature>
<feature type="binding site" evidence="2">
    <location>
        <position position="166"/>
    </location>
    <ligand>
        <name>substrate</name>
    </ligand>
</feature>
<feature type="binding site" evidence="3 5">
    <location>
        <position position="260"/>
    </location>
    <ligand>
        <name>Zn(2+)</name>
        <dbReference type="ChEBI" id="CHEBI:29105"/>
        <label>1</label>
    </ligand>
</feature>
<feature type="binding site" evidence="3 5 6">
    <location>
        <position position="260"/>
    </location>
    <ligand>
        <name>Zn(2+)</name>
        <dbReference type="ChEBI" id="CHEBI:29105"/>
        <label>2</label>
    </ligand>
</feature>
<feature type="binding site" evidence="2">
    <location>
        <position position="297"/>
    </location>
    <ligand>
        <name>substrate</name>
    </ligand>
</feature>
<feature type="binding site" evidence="3 5">
    <location>
        <position position="297"/>
    </location>
    <ligand>
        <name>Zn(2+)</name>
        <dbReference type="ChEBI" id="CHEBI:29105"/>
        <label>1</label>
    </ligand>
</feature>
<feature type="binding site" evidence="3 5">
    <location>
        <position position="298"/>
    </location>
    <ligand>
        <name>Zn(2+)</name>
        <dbReference type="ChEBI" id="CHEBI:29105"/>
        <label>1</label>
    </ligand>
</feature>
<feature type="binding site" evidence="3 5 6">
    <location>
        <position position="298"/>
    </location>
    <ligand>
        <name>Zn(2+)</name>
        <dbReference type="ChEBI" id="CHEBI:29105"/>
        <label>2</label>
    </ligand>
</feature>
<feature type="binding site" evidence="2">
    <location>
        <position position="342"/>
    </location>
    <ligand>
        <name>substrate</name>
    </ligand>
</feature>
<feature type="binding site" evidence="3 5">
    <location>
        <position position="342"/>
    </location>
    <ligand>
        <name>Zn(2+)</name>
        <dbReference type="ChEBI" id="CHEBI:29105"/>
        <label>1</label>
    </ligand>
</feature>
<feature type="binding site" evidence="2">
    <location>
        <position position="345"/>
    </location>
    <ligand>
        <name>substrate</name>
    </ligand>
</feature>
<feature type="binding site" evidence="2">
    <location>
        <position position="370"/>
    </location>
    <ligand>
        <name>substrate</name>
    </ligand>
</feature>
<feature type="binding site" evidence="2">
    <location>
        <position position="377"/>
    </location>
    <ligand>
        <name>substrate</name>
    </ligand>
</feature>
<feature type="binding site" evidence="3 5 6">
    <location>
        <position position="436"/>
    </location>
    <ligand>
        <name>Zn(2+)</name>
        <dbReference type="ChEBI" id="CHEBI:29105"/>
        <label>2</label>
    </ligand>
</feature>
<feature type="modified residue" description="Phosphothreonine" evidence="2">
    <location>
        <position position="199"/>
    </location>
</feature>
<feature type="helix" evidence="7">
    <location>
        <begin position="5"/>
        <end position="22"/>
    </location>
</feature>
<feature type="helix" evidence="7">
    <location>
        <begin position="27"/>
        <end position="40"/>
    </location>
</feature>
<feature type="strand" evidence="7">
    <location>
        <begin position="59"/>
        <end position="64"/>
    </location>
</feature>
<feature type="turn" evidence="7">
    <location>
        <begin position="65"/>
        <end position="67"/>
    </location>
</feature>
<feature type="strand" evidence="7">
    <location>
        <begin position="68"/>
        <end position="74"/>
    </location>
</feature>
<feature type="strand" evidence="7">
    <location>
        <begin position="84"/>
        <end position="90"/>
    </location>
</feature>
<feature type="strand" evidence="7">
    <location>
        <begin position="95"/>
        <end position="106"/>
    </location>
</feature>
<feature type="strand" evidence="7">
    <location>
        <begin position="109"/>
        <end position="119"/>
    </location>
</feature>
<feature type="helix" evidence="7">
    <location>
        <begin position="122"/>
        <end position="125"/>
    </location>
</feature>
<feature type="strand" evidence="7">
    <location>
        <begin position="130"/>
        <end position="139"/>
    </location>
</feature>
<feature type="turn" evidence="7">
    <location>
        <begin position="141"/>
        <end position="143"/>
    </location>
</feature>
<feature type="strand" evidence="7">
    <location>
        <begin position="146"/>
        <end position="152"/>
    </location>
</feature>
<feature type="helix" evidence="7">
    <location>
        <begin position="165"/>
        <end position="167"/>
    </location>
</feature>
<feature type="turn" evidence="7">
    <location>
        <begin position="169"/>
        <end position="173"/>
    </location>
</feature>
<feature type="turn" evidence="7">
    <location>
        <begin position="179"/>
        <end position="183"/>
    </location>
</feature>
<feature type="strand" evidence="7">
    <location>
        <begin position="186"/>
        <end position="189"/>
    </location>
</feature>
<feature type="helix" evidence="7">
    <location>
        <begin position="190"/>
        <end position="196"/>
    </location>
</feature>
<feature type="helix" evidence="7">
    <location>
        <begin position="214"/>
        <end position="224"/>
    </location>
</feature>
<feature type="helix" evidence="7">
    <location>
        <begin position="228"/>
        <end position="230"/>
    </location>
</feature>
<feature type="strand" evidence="7">
    <location>
        <begin position="231"/>
        <end position="240"/>
    </location>
</feature>
<feature type="strand" evidence="7">
    <location>
        <begin position="245"/>
        <end position="247"/>
    </location>
</feature>
<feature type="turn" evidence="7">
    <location>
        <begin position="248"/>
        <end position="251"/>
    </location>
</feature>
<feature type="strand" evidence="7">
    <location>
        <begin position="253"/>
        <end position="256"/>
    </location>
</feature>
<feature type="helix" evidence="7">
    <location>
        <begin position="259"/>
        <end position="275"/>
    </location>
</feature>
<feature type="helix" evidence="7">
    <location>
        <begin position="279"/>
        <end position="284"/>
    </location>
</feature>
<feature type="strand" evidence="7">
    <location>
        <begin position="287"/>
        <end position="295"/>
    </location>
</feature>
<feature type="helix" evidence="7">
    <location>
        <begin position="297"/>
        <end position="299"/>
    </location>
</feature>
<feature type="strand" evidence="7">
    <location>
        <begin position="303"/>
        <end position="306"/>
    </location>
</feature>
<feature type="helix" evidence="7">
    <location>
        <begin position="311"/>
        <end position="320"/>
    </location>
</feature>
<feature type="helix" evidence="7">
    <location>
        <begin position="328"/>
        <end position="332"/>
    </location>
</feature>
<feature type="helix" evidence="7">
    <location>
        <begin position="333"/>
        <end position="335"/>
    </location>
</feature>
<feature type="strand" evidence="7">
    <location>
        <begin position="337"/>
        <end position="341"/>
    </location>
</feature>
<feature type="helix" evidence="7">
    <location>
        <begin position="352"/>
        <end position="354"/>
    </location>
</feature>
<feature type="strand" evidence="7">
    <location>
        <begin position="368"/>
        <end position="370"/>
    </location>
</feature>
<feature type="turn" evidence="7">
    <location>
        <begin position="373"/>
        <end position="376"/>
    </location>
</feature>
<feature type="helix" evidence="7">
    <location>
        <begin position="381"/>
        <end position="394"/>
    </location>
</feature>
<feature type="strand" evidence="7">
    <location>
        <begin position="399"/>
        <end position="401"/>
    </location>
</feature>
<feature type="helix" evidence="7">
    <location>
        <begin position="413"/>
        <end position="421"/>
    </location>
</feature>
<feature type="strand" evidence="7">
    <location>
        <begin position="424"/>
        <end position="429"/>
    </location>
</feature>
<feature type="strand" evidence="7">
    <location>
        <begin position="431"/>
        <end position="434"/>
    </location>
</feature>
<feature type="strand" evidence="7">
    <location>
        <begin position="437"/>
        <end position="444"/>
    </location>
</feature>
<feature type="helix" evidence="7">
    <location>
        <begin position="445"/>
        <end position="466"/>
    </location>
</feature>
<gene>
    <name evidence="2" type="primary">DNPEP</name>
</gene>
<proteinExistence type="evidence at protein level"/>
<accession>Q2HJH1</accession>
<dbReference type="EC" id="3.4.11.21" evidence="2"/>
<dbReference type="EMBL" id="BC105402">
    <property type="protein sequence ID" value="AAI05403.1"/>
    <property type="molecule type" value="mRNA"/>
</dbReference>
<dbReference type="RefSeq" id="NP_001039417.1">
    <property type="nucleotide sequence ID" value="NM_001045952.1"/>
</dbReference>
<dbReference type="RefSeq" id="XP_024855612.1">
    <property type="nucleotide sequence ID" value="XM_024999844.2"/>
</dbReference>
<dbReference type="PDB" id="3VAR">
    <property type="method" value="X-ray"/>
    <property type="resolution" value="2.25 A"/>
    <property type="chains" value="A=3-471"/>
</dbReference>
<dbReference type="PDB" id="3VAT">
    <property type="method" value="X-ray"/>
    <property type="resolution" value="2.10 A"/>
    <property type="chains" value="A=3-471"/>
</dbReference>
<dbReference type="PDB" id="7U5H">
    <property type="method" value="EM"/>
    <property type="resolution" value="3.32 A"/>
    <property type="chains" value="A/B/C/D/E/F/G/H/I/J/K/L=1-471"/>
</dbReference>
<dbReference type="PDBsum" id="3VAR"/>
<dbReference type="PDBsum" id="3VAT"/>
<dbReference type="PDBsum" id="7U5H"/>
<dbReference type="EMDB" id="EMD-26350"/>
<dbReference type="SMR" id="Q2HJH1"/>
<dbReference type="FunCoup" id="Q2HJH1">
    <property type="interactions" value="2989"/>
</dbReference>
<dbReference type="STRING" id="9913.ENSBTAP00000028671"/>
<dbReference type="MEROPS" id="M18.002"/>
<dbReference type="PaxDb" id="9913-ENSBTAP00000028671"/>
<dbReference type="PeptideAtlas" id="Q2HJH1"/>
<dbReference type="Ensembl" id="ENSBTAT00000090699.1">
    <property type="protein sequence ID" value="ENSBTAP00000078667.1"/>
    <property type="gene ID" value="ENSBTAG00000021514.6"/>
</dbReference>
<dbReference type="GeneID" id="506882"/>
<dbReference type="KEGG" id="bta:506882"/>
<dbReference type="CTD" id="23549"/>
<dbReference type="VEuPathDB" id="HostDB:ENSBTAG00000021514"/>
<dbReference type="VGNC" id="VGNC:28148">
    <property type="gene designation" value="DNPEP"/>
</dbReference>
<dbReference type="eggNOG" id="KOG2596">
    <property type="taxonomic scope" value="Eukaryota"/>
</dbReference>
<dbReference type="GeneTree" id="ENSGT00390000003164"/>
<dbReference type="HOGENOM" id="CLU_019532_2_0_1"/>
<dbReference type="InParanoid" id="Q2HJH1"/>
<dbReference type="OMA" id="GPILKVN"/>
<dbReference type="OrthoDB" id="9880441at2759"/>
<dbReference type="TreeFam" id="TF300487"/>
<dbReference type="EvolutionaryTrace" id="Q2HJH1"/>
<dbReference type="Proteomes" id="UP000009136">
    <property type="component" value="Chromosome 2"/>
</dbReference>
<dbReference type="Bgee" id="ENSBTAG00000021514">
    <property type="expression patterns" value="Expressed in spermatid and 106 other cell types or tissues"/>
</dbReference>
<dbReference type="GO" id="GO:0005737">
    <property type="term" value="C:cytoplasm"/>
    <property type="evidence" value="ECO:0007669"/>
    <property type="project" value="UniProtKB-SubCell"/>
</dbReference>
<dbReference type="GO" id="GO:0004177">
    <property type="term" value="F:aminopeptidase activity"/>
    <property type="evidence" value="ECO:0007669"/>
    <property type="project" value="UniProtKB-KW"/>
</dbReference>
<dbReference type="GO" id="GO:0008237">
    <property type="term" value="F:metallopeptidase activity"/>
    <property type="evidence" value="ECO:0007669"/>
    <property type="project" value="UniProtKB-KW"/>
</dbReference>
<dbReference type="GO" id="GO:0008270">
    <property type="term" value="F:zinc ion binding"/>
    <property type="evidence" value="ECO:0007669"/>
    <property type="project" value="InterPro"/>
</dbReference>
<dbReference type="GO" id="GO:0006508">
    <property type="term" value="P:proteolysis"/>
    <property type="evidence" value="ECO:0007669"/>
    <property type="project" value="UniProtKB-KW"/>
</dbReference>
<dbReference type="CDD" id="cd05658">
    <property type="entry name" value="M18_DAP"/>
    <property type="match status" value="1"/>
</dbReference>
<dbReference type="FunFam" id="2.30.250.10:FF:000002">
    <property type="entry name" value="Aspartyl aminopeptidase"/>
    <property type="match status" value="1"/>
</dbReference>
<dbReference type="FunFam" id="3.40.630.10:FF:000152">
    <property type="entry name" value="aspartyl aminopeptidase isoform X2"/>
    <property type="match status" value="1"/>
</dbReference>
<dbReference type="Gene3D" id="2.30.250.10">
    <property type="entry name" value="Aminopeptidase i, Domain 2"/>
    <property type="match status" value="1"/>
</dbReference>
<dbReference type="Gene3D" id="3.40.630.10">
    <property type="entry name" value="Zn peptidases"/>
    <property type="match status" value="1"/>
</dbReference>
<dbReference type="InterPro" id="IPR014720">
    <property type="entry name" value="dsRBD_dom"/>
</dbReference>
<dbReference type="InterPro" id="IPR001948">
    <property type="entry name" value="Peptidase_M18"/>
</dbReference>
<dbReference type="InterPro" id="IPR023358">
    <property type="entry name" value="Peptidase_M18_dom2"/>
</dbReference>
<dbReference type="NCBIfam" id="NF002759">
    <property type="entry name" value="PRK02813.1"/>
    <property type="match status" value="1"/>
</dbReference>
<dbReference type="PANTHER" id="PTHR28570">
    <property type="entry name" value="ASPARTYL AMINOPEPTIDASE"/>
    <property type="match status" value="1"/>
</dbReference>
<dbReference type="PANTHER" id="PTHR28570:SF3">
    <property type="entry name" value="ASPARTYL AMINOPEPTIDASE"/>
    <property type="match status" value="1"/>
</dbReference>
<dbReference type="Pfam" id="PF02127">
    <property type="entry name" value="Peptidase_M18"/>
    <property type="match status" value="1"/>
</dbReference>
<dbReference type="PRINTS" id="PR00932">
    <property type="entry name" value="AMINO1PTASE"/>
</dbReference>
<dbReference type="SUPFAM" id="SSF101821">
    <property type="entry name" value="Aminopeptidase/glucanase lid domain"/>
    <property type="match status" value="1"/>
</dbReference>
<dbReference type="SUPFAM" id="SSF53187">
    <property type="entry name" value="Zn-dependent exopeptidases"/>
    <property type="match status" value="1"/>
</dbReference>
<evidence type="ECO:0000250" key="1"/>
<evidence type="ECO:0000250" key="2">
    <source>
        <dbReference type="UniProtKB" id="Q9ULA0"/>
    </source>
</evidence>
<evidence type="ECO:0000269" key="3">
    <source>
    </source>
</evidence>
<evidence type="ECO:0000305" key="4"/>
<evidence type="ECO:0007744" key="5">
    <source>
        <dbReference type="PDB" id="3VAR"/>
    </source>
</evidence>
<evidence type="ECO:0007744" key="6">
    <source>
        <dbReference type="PDB" id="3VAT"/>
    </source>
</evidence>
<evidence type="ECO:0007829" key="7">
    <source>
        <dbReference type="PDB" id="3VAT"/>
    </source>
</evidence>
<name>DNPEP_BOVIN</name>
<keyword id="KW-0002">3D-structure</keyword>
<keyword id="KW-0031">Aminopeptidase</keyword>
<keyword id="KW-0963">Cytoplasm</keyword>
<keyword id="KW-0378">Hydrolase</keyword>
<keyword id="KW-0479">Metal-binding</keyword>
<keyword id="KW-0482">Metalloprotease</keyword>
<keyword id="KW-0597">Phosphoprotein</keyword>
<keyword id="KW-0645">Protease</keyword>
<keyword id="KW-1185">Reference proteome</keyword>
<keyword id="KW-0862">Zinc</keyword>
<organism>
    <name type="scientific">Bos taurus</name>
    <name type="common">Bovine</name>
    <dbReference type="NCBI Taxonomy" id="9913"/>
    <lineage>
        <taxon>Eukaryota</taxon>
        <taxon>Metazoa</taxon>
        <taxon>Chordata</taxon>
        <taxon>Craniata</taxon>
        <taxon>Vertebrata</taxon>
        <taxon>Euteleostomi</taxon>
        <taxon>Mammalia</taxon>
        <taxon>Eutheria</taxon>
        <taxon>Laurasiatheria</taxon>
        <taxon>Artiodactyla</taxon>
        <taxon>Ruminantia</taxon>
        <taxon>Pecora</taxon>
        <taxon>Bovidae</taxon>
        <taxon>Bovinae</taxon>
        <taxon>Bos</taxon>
    </lineage>
</organism>
<protein>
    <recommendedName>
        <fullName evidence="2">Aspartyl aminopeptidase</fullName>
        <ecNumber evidence="2">3.4.11.21</ecNumber>
    </recommendedName>
</protein>
<comment type="function">
    <text evidence="1">Aminopeptidase with specificity towards an acidic amino acid at the N-terminus. Likely to play an important role in intracellular protein and peptide metabolism (By similarity).</text>
</comment>
<comment type="catalytic activity">
    <reaction>
        <text>Release of an N-terminal aspartate or glutamate from a peptide, with a preference for aspartate.</text>
        <dbReference type="EC" id="3.4.11.21"/>
    </reaction>
</comment>
<comment type="cofactor">
    <cofactor>
        <name>Zn(2+)</name>
        <dbReference type="ChEBI" id="CHEBI:29105"/>
    </cofactor>
    <text>Binds 2 Zn(2+) ions per subunit.</text>
</comment>
<comment type="activity regulation">
    <text evidence="3">One of the zinc ions is readily exchangeable with other divalent cations such as manganese, which strongly stimulates the enzymatic activity.</text>
</comment>
<comment type="subunit">
    <text evidence="1">Tetrahedron-shaped homododecamer built from six homodimers.</text>
</comment>
<comment type="subcellular location">
    <subcellularLocation>
        <location>Cytoplasm</location>
    </subcellularLocation>
</comment>
<comment type="similarity">
    <text evidence="4">Belongs to the peptidase M18 family.</text>
</comment>
<reference key="1">
    <citation type="submission" date="2005-09" db="EMBL/GenBank/DDBJ databases">
        <authorList>
            <consortium name="NIH - Mammalian Gene Collection (MGC) project"/>
        </authorList>
    </citation>
    <scope>NUCLEOTIDE SEQUENCE [LARGE SCALE MRNA]</scope>
    <source>
        <strain>Crossbred X Angus</strain>
        <tissue>Ileum</tissue>
    </source>
</reference>
<reference key="2">
    <citation type="journal article" date="2012" name="J. Biol. Chem.">
        <title>Insights into substrate specificity and metal activation of mammalian tetrahedral aspartyl aminopeptidase.</title>
        <authorList>
            <person name="Chen Y."/>
            <person name="Farquhar E.R."/>
            <person name="Chance M.R."/>
            <person name="Palczewski K."/>
            <person name="Kiser P.D."/>
        </authorList>
    </citation>
    <scope>X-RAY CRYSTALLOGRAPHY (2.1 ANGSTROMS) OF 3-471 IN COMPLEX WITH ZN(2+)</scope>
    <scope>ELECTRON MICROSCOPY (22 ANGSTROMS)</scope>
    <scope>ACTIVITY REGULATION</scope>
</reference>